<protein>
    <recommendedName>
        <fullName>Calpain-5</fullName>
        <ecNumber>3.4.22.-</ecNumber>
    </recommendedName>
    <alternativeName>
        <fullName>New calpain 3</fullName>
        <shortName>nCL-3</shortName>
    </alternativeName>
</protein>
<evidence type="ECO:0000250" key="1"/>
<evidence type="ECO:0000255" key="2">
    <source>
        <dbReference type="PROSITE-ProRule" id="PRU00041"/>
    </source>
</evidence>
<evidence type="ECO:0000255" key="3">
    <source>
        <dbReference type="PROSITE-ProRule" id="PRU00239"/>
    </source>
</evidence>
<evidence type="ECO:0000269" key="4">
    <source>
    </source>
</evidence>
<evidence type="ECO:0000269" key="5">
    <source>
    </source>
</evidence>
<evidence type="ECO:0000305" key="6"/>
<dbReference type="EC" id="3.4.22.-"/>
<dbReference type="EMBL" id="Y10656">
    <property type="protein sequence ID" value="CAA71666.1"/>
    <property type="molecule type" value="mRNA"/>
</dbReference>
<dbReference type="EMBL" id="U85020">
    <property type="protein sequence ID" value="AAD00559.1"/>
    <property type="molecule type" value="mRNA"/>
</dbReference>
<dbReference type="EMBL" id="BC014767">
    <property type="protein sequence ID" value="AAH14767.1"/>
    <property type="molecule type" value="mRNA"/>
</dbReference>
<dbReference type="CCDS" id="CCDS21465.1"/>
<dbReference type="RefSeq" id="NP_001288179.1">
    <property type="nucleotide sequence ID" value="NM_001301250.1"/>
</dbReference>
<dbReference type="RefSeq" id="NP_031628.1">
    <property type="nucleotide sequence ID" value="NM_007602.4"/>
</dbReference>
<dbReference type="RefSeq" id="XP_030097894.1">
    <property type="nucleotide sequence ID" value="XM_030242034.2"/>
</dbReference>
<dbReference type="RefSeq" id="XP_030097895.1">
    <property type="nucleotide sequence ID" value="XM_030242035.1"/>
</dbReference>
<dbReference type="RefSeq" id="XP_030097896.1">
    <property type="nucleotide sequence ID" value="XM_030242036.1"/>
</dbReference>
<dbReference type="RefSeq" id="XP_030097897.1">
    <property type="nucleotide sequence ID" value="XM_030242037.2"/>
</dbReference>
<dbReference type="RefSeq" id="XP_030097898.1">
    <property type="nucleotide sequence ID" value="XM_030242038.2"/>
</dbReference>
<dbReference type="SMR" id="O08688"/>
<dbReference type="BioGRID" id="198474">
    <property type="interactions" value="13"/>
</dbReference>
<dbReference type="FunCoup" id="O08688">
    <property type="interactions" value="176"/>
</dbReference>
<dbReference type="IntAct" id="O08688">
    <property type="interactions" value="1"/>
</dbReference>
<dbReference type="MINT" id="O08688"/>
<dbReference type="STRING" id="10090.ENSMUSP00000048183"/>
<dbReference type="MEROPS" id="C02.011"/>
<dbReference type="GlyGen" id="O08688">
    <property type="glycosylation" value="1 site"/>
</dbReference>
<dbReference type="iPTMnet" id="O08688"/>
<dbReference type="PhosphoSitePlus" id="O08688"/>
<dbReference type="SwissPalm" id="O08688"/>
<dbReference type="jPOST" id="O08688"/>
<dbReference type="PaxDb" id="10090-ENSMUSP00000048183"/>
<dbReference type="PeptideAtlas" id="O08688"/>
<dbReference type="ProteomicsDB" id="273908"/>
<dbReference type="Pumba" id="O08688"/>
<dbReference type="Antibodypedia" id="31220">
    <property type="antibodies" value="271 antibodies from 29 providers"/>
</dbReference>
<dbReference type="DNASU" id="12337"/>
<dbReference type="Ensembl" id="ENSMUST00000040971.14">
    <property type="protein sequence ID" value="ENSMUSP00000048183.8"/>
    <property type="gene ID" value="ENSMUSG00000035547.15"/>
</dbReference>
<dbReference type="Ensembl" id="ENSMUST00000107112.2">
    <property type="protein sequence ID" value="ENSMUSP00000102729.2"/>
    <property type="gene ID" value="ENSMUSG00000035547.15"/>
</dbReference>
<dbReference type="GeneID" id="12337"/>
<dbReference type="KEGG" id="mmu:12337"/>
<dbReference type="UCSC" id="uc009ikc.2">
    <property type="organism name" value="mouse"/>
</dbReference>
<dbReference type="AGR" id="MGI:1100859"/>
<dbReference type="CTD" id="726"/>
<dbReference type="MGI" id="MGI:1100859">
    <property type="gene designation" value="Capn5"/>
</dbReference>
<dbReference type="VEuPathDB" id="HostDB:ENSMUSG00000035547"/>
<dbReference type="eggNOG" id="KOG0045">
    <property type="taxonomic scope" value="Eukaryota"/>
</dbReference>
<dbReference type="GeneTree" id="ENSGT00940000156536"/>
<dbReference type="HOGENOM" id="CLU_010982_3_2_1"/>
<dbReference type="InParanoid" id="O08688"/>
<dbReference type="OMA" id="DICENPR"/>
<dbReference type="OrthoDB" id="424753at2759"/>
<dbReference type="PhylomeDB" id="O08688"/>
<dbReference type="TreeFam" id="TF314748"/>
<dbReference type="BRENDA" id="3.4.22.B25">
    <property type="organism ID" value="3474"/>
</dbReference>
<dbReference type="Reactome" id="R-MMU-1474228">
    <property type="pathway name" value="Degradation of the extracellular matrix"/>
</dbReference>
<dbReference type="BioGRID-ORCS" id="12337">
    <property type="hits" value="2 hits in 81 CRISPR screens"/>
</dbReference>
<dbReference type="CD-CODE" id="CE726F99">
    <property type="entry name" value="Postsynaptic density"/>
</dbReference>
<dbReference type="ChiTaRS" id="Capn5">
    <property type="organism name" value="mouse"/>
</dbReference>
<dbReference type="PRO" id="PR:O08688"/>
<dbReference type="Proteomes" id="UP000000589">
    <property type="component" value="Chromosome 7"/>
</dbReference>
<dbReference type="RNAct" id="O08688">
    <property type="molecule type" value="protein"/>
</dbReference>
<dbReference type="Bgee" id="ENSMUSG00000035547">
    <property type="expression patterns" value="Expressed in urinary bladder urothelium and 187 other cell types or tissues"/>
</dbReference>
<dbReference type="ExpressionAtlas" id="O08688">
    <property type="expression patterns" value="baseline and differential"/>
</dbReference>
<dbReference type="GO" id="GO:0009986">
    <property type="term" value="C:cell surface"/>
    <property type="evidence" value="ECO:0000250"/>
    <property type="project" value="UniProtKB"/>
</dbReference>
<dbReference type="GO" id="GO:0045202">
    <property type="term" value="C:synapse"/>
    <property type="evidence" value="ECO:0000314"/>
    <property type="project" value="MGI"/>
</dbReference>
<dbReference type="GO" id="GO:0004198">
    <property type="term" value="F:calcium-dependent cysteine-type endopeptidase activity"/>
    <property type="evidence" value="ECO:0007669"/>
    <property type="project" value="InterPro"/>
</dbReference>
<dbReference type="GO" id="GO:0006508">
    <property type="term" value="P:proteolysis"/>
    <property type="evidence" value="ECO:0007669"/>
    <property type="project" value="UniProtKB-KW"/>
</dbReference>
<dbReference type="CDD" id="cd04046">
    <property type="entry name" value="C2_Calpain"/>
    <property type="match status" value="1"/>
</dbReference>
<dbReference type="CDD" id="cd00214">
    <property type="entry name" value="Calpain_III"/>
    <property type="match status" value="1"/>
</dbReference>
<dbReference type="CDD" id="cd00044">
    <property type="entry name" value="CysPc"/>
    <property type="match status" value="1"/>
</dbReference>
<dbReference type="FunFam" id="2.60.120.380:FF:000003">
    <property type="entry name" value="Calpain 5"/>
    <property type="match status" value="1"/>
</dbReference>
<dbReference type="FunFam" id="2.60.40.150:FF:000136">
    <property type="entry name" value="Calpain 5"/>
    <property type="match status" value="1"/>
</dbReference>
<dbReference type="FunFam" id="3.90.70.10:FF:000027">
    <property type="entry name" value="Calpain 5"/>
    <property type="match status" value="1"/>
</dbReference>
<dbReference type="Gene3D" id="2.60.120.380">
    <property type="match status" value="1"/>
</dbReference>
<dbReference type="Gene3D" id="2.60.40.150">
    <property type="entry name" value="C2 domain"/>
    <property type="match status" value="1"/>
</dbReference>
<dbReference type="Gene3D" id="3.90.70.10">
    <property type="entry name" value="Cysteine proteinases"/>
    <property type="match status" value="1"/>
</dbReference>
<dbReference type="InterPro" id="IPR033884">
    <property type="entry name" value="C2_Calpain"/>
</dbReference>
<dbReference type="InterPro" id="IPR000008">
    <property type="entry name" value="C2_dom"/>
</dbReference>
<dbReference type="InterPro" id="IPR035892">
    <property type="entry name" value="C2_domain_sf"/>
</dbReference>
<dbReference type="InterPro" id="IPR033883">
    <property type="entry name" value="C2_III"/>
</dbReference>
<dbReference type="InterPro" id="IPR022684">
    <property type="entry name" value="Calpain_cysteine_protease"/>
</dbReference>
<dbReference type="InterPro" id="IPR022682">
    <property type="entry name" value="Calpain_domain_III"/>
</dbReference>
<dbReference type="InterPro" id="IPR022683">
    <property type="entry name" value="Calpain_III"/>
</dbReference>
<dbReference type="InterPro" id="IPR036213">
    <property type="entry name" value="Calpain_III_sf"/>
</dbReference>
<dbReference type="InterPro" id="IPR038765">
    <property type="entry name" value="Papain-like_cys_pep_sf"/>
</dbReference>
<dbReference type="InterPro" id="IPR000169">
    <property type="entry name" value="Pept_cys_AS"/>
</dbReference>
<dbReference type="InterPro" id="IPR001300">
    <property type="entry name" value="Peptidase_C2_calpain_cat"/>
</dbReference>
<dbReference type="PANTHER" id="PTHR10183">
    <property type="entry name" value="CALPAIN"/>
    <property type="match status" value="1"/>
</dbReference>
<dbReference type="PANTHER" id="PTHR10183:SF402">
    <property type="entry name" value="CALPAIN-5"/>
    <property type="match status" value="1"/>
</dbReference>
<dbReference type="Pfam" id="PF00168">
    <property type="entry name" value="C2"/>
    <property type="match status" value="1"/>
</dbReference>
<dbReference type="Pfam" id="PF01067">
    <property type="entry name" value="Calpain_III"/>
    <property type="match status" value="1"/>
</dbReference>
<dbReference type="Pfam" id="PF00648">
    <property type="entry name" value="Peptidase_C2"/>
    <property type="match status" value="1"/>
</dbReference>
<dbReference type="PRINTS" id="PR00704">
    <property type="entry name" value="CALPAIN"/>
</dbReference>
<dbReference type="SMART" id="SM00239">
    <property type="entry name" value="C2"/>
    <property type="match status" value="1"/>
</dbReference>
<dbReference type="SMART" id="SM00720">
    <property type="entry name" value="calpain_III"/>
    <property type="match status" value="1"/>
</dbReference>
<dbReference type="SMART" id="SM00230">
    <property type="entry name" value="CysPc"/>
    <property type="match status" value="1"/>
</dbReference>
<dbReference type="SUPFAM" id="SSF49562">
    <property type="entry name" value="C2 domain (Calcium/lipid-binding domain, CaLB)"/>
    <property type="match status" value="1"/>
</dbReference>
<dbReference type="SUPFAM" id="SSF49758">
    <property type="entry name" value="Calpain large subunit, middle domain (domain III)"/>
    <property type="match status" value="1"/>
</dbReference>
<dbReference type="SUPFAM" id="SSF54001">
    <property type="entry name" value="Cysteine proteinases"/>
    <property type="match status" value="1"/>
</dbReference>
<dbReference type="PROSITE" id="PS50004">
    <property type="entry name" value="C2"/>
    <property type="match status" value="1"/>
</dbReference>
<dbReference type="PROSITE" id="PS50203">
    <property type="entry name" value="CALPAIN_CAT"/>
    <property type="match status" value="1"/>
</dbReference>
<dbReference type="PROSITE" id="PS00139">
    <property type="entry name" value="THIOL_PROTEASE_CYS"/>
    <property type="match status" value="1"/>
</dbReference>
<proteinExistence type="evidence at protein level"/>
<keyword id="KW-0378">Hydrolase</keyword>
<keyword id="KW-0645">Protease</keyword>
<keyword id="KW-1185">Reference proteome</keyword>
<keyword id="KW-0788">Thiol protease</keyword>
<gene>
    <name type="primary">Capn5</name>
    <name type="synonym">Ncl3</name>
</gene>
<feature type="chain" id="PRO_0000207714" description="Calpain-5">
    <location>
        <begin position="1"/>
        <end position="640"/>
    </location>
</feature>
<feature type="domain" description="Calpain catalytic" evidence="3">
    <location>
        <begin position="26"/>
        <end position="343"/>
    </location>
</feature>
<feature type="domain" description="C2" evidence="2">
    <location>
        <begin position="499"/>
        <end position="617"/>
    </location>
</feature>
<feature type="region of interest" description="Domain III">
    <location>
        <begin position="344"/>
        <end position="496"/>
    </location>
</feature>
<feature type="active site" evidence="1">
    <location>
        <position position="81"/>
    </location>
</feature>
<feature type="active site" evidence="1">
    <location>
        <position position="252"/>
    </location>
</feature>
<feature type="active site" evidence="1">
    <location>
        <position position="284"/>
    </location>
</feature>
<feature type="sequence variant" evidence="4 5">
    <original>D</original>
    <variation>N</variation>
    <location>
        <position position="427"/>
    </location>
</feature>
<sequence length="640" mass="72955">MFSCAKAYEDQNYSALKRACLRKKVLFEDPLFPATDDSLYYKGTPGPTVRWKRPKDICDDPRLFVDGISSHDLHQGQVGNCWFVAACSSLASRESLWQKVIPDWKEQEWNPEKPDSYAGIFHFNFWRFGEWVDVIVDDRLPTVNNQLIYCHSNSKNEFWCALVEKAYAKLAGCYQALDGGNTADALVDFTGGVSEPIDLTEGDLATDEAKRNQLFERVLKVHSRGGLISASIKAVTAADMEARLACGLVKGHAYAVTDVRKVRLGHGLLAFFKSEKLDMIRLRNPWGEREWTGPWSDTSEEWQKVSKSEREKMGVTVQDDGEFWMTFEDMCRYFTDIIKCRLINTSYLSIHKTWEEARLHGAWTRHEDPQQNRSGGCINHKDTFFQNPQYVFEVKKPEDEVLISIQQRPKRSTRREGKGENLAIGFDIYKVEENRQYRMHSLQHKAASSIYINSRSVFLRTELPEGRYVIIPTTFEPGHTGEFLLRVFTDVPSNCRELRLDEPPRTCWSSLCGYPQQVAQVHVLGAAGLKDSPTGANSYVIIKCEGEKVRSAVQRGTSTPEYNVKGIFYRKKLAQPITVQVWNHRVLKDEFLGQVHLKTAPDDLQDLHTLHLQDRSSRQPSDLPGIVAVRVLCSASLTAV</sequence>
<comment type="function">
    <text evidence="1">Calcium-regulated non-lysosomal thiol-protease.</text>
</comment>
<comment type="similarity">
    <text evidence="6">Belongs to the peptidase C2 family.</text>
</comment>
<name>CAN5_MOUSE</name>
<organism>
    <name type="scientific">Mus musculus</name>
    <name type="common">Mouse</name>
    <dbReference type="NCBI Taxonomy" id="10090"/>
    <lineage>
        <taxon>Eukaryota</taxon>
        <taxon>Metazoa</taxon>
        <taxon>Chordata</taxon>
        <taxon>Craniata</taxon>
        <taxon>Vertebrata</taxon>
        <taxon>Euteleostomi</taxon>
        <taxon>Mammalia</taxon>
        <taxon>Eutheria</taxon>
        <taxon>Euarchontoglires</taxon>
        <taxon>Glires</taxon>
        <taxon>Rodentia</taxon>
        <taxon>Myomorpha</taxon>
        <taxon>Muroidea</taxon>
        <taxon>Muridae</taxon>
        <taxon>Murinae</taxon>
        <taxon>Mus</taxon>
        <taxon>Mus</taxon>
    </lineage>
</organism>
<accession>O08688</accession>
<accession>Q91YU0</accession>
<reference key="1">
    <citation type="journal article" date="1997" name="Genomics">
        <title>A new subfamily of vertebrate calpains lacking a calmodulin-like domain: implications for calpain regulation and evolution.</title>
        <authorList>
            <person name="Dear T.N."/>
            <person name="Matena K."/>
            <person name="Vingron M."/>
            <person name="Boehm T."/>
        </authorList>
    </citation>
    <scope>NUCLEOTIDE SEQUENCE [MRNA]</scope>
    <source>
        <strain>BALB/cJ</strain>
    </source>
</reference>
<reference key="2">
    <citation type="journal article" date="1998" name="Genomics">
        <title>Genomic organization of mouse Capn5 and Capn6 genes confirms that they are a distinct calpain subfamily.</title>
        <authorList>
            <person name="Matena K."/>
            <person name="Boehm T."/>
            <person name="Dear N.T."/>
        </authorList>
    </citation>
    <scope>NUCLEOTIDE SEQUENCE [MRNA]</scope>
    <scope>VARIANT ASN-427</scope>
</reference>
<reference key="3">
    <citation type="submission" date="1997-01" db="EMBL/GenBank/DDBJ databases">
        <authorList>
            <person name="Algate P.A."/>
        </authorList>
    </citation>
    <scope>NUCLEOTIDE SEQUENCE [MRNA]</scope>
</reference>
<reference key="4">
    <citation type="journal article" date="2004" name="Genome Res.">
        <title>The status, quality, and expansion of the NIH full-length cDNA project: the Mammalian Gene Collection (MGC).</title>
        <authorList>
            <consortium name="The MGC Project Team"/>
        </authorList>
    </citation>
    <scope>NUCLEOTIDE SEQUENCE [LARGE SCALE MRNA]</scope>
    <scope>VARIANT ASN-427</scope>
</reference>
<reference key="5">
    <citation type="journal article" date="2010" name="Cell">
        <title>A tissue-specific atlas of mouse protein phosphorylation and expression.</title>
        <authorList>
            <person name="Huttlin E.L."/>
            <person name="Jedrychowski M.P."/>
            <person name="Elias J.E."/>
            <person name="Goswami T."/>
            <person name="Rad R."/>
            <person name="Beausoleil S.A."/>
            <person name="Villen J."/>
            <person name="Haas W."/>
            <person name="Sowa M.E."/>
            <person name="Gygi S.P."/>
        </authorList>
    </citation>
    <scope>IDENTIFICATION BY MASS SPECTROMETRY [LARGE SCALE ANALYSIS]</scope>
    <source>
        <tissue>Brain</tissue>
        <tissue>Kidney</tissue>
        <tissue>Lung</tissue>
        <tissue>Spleen</tissue>
    </source>
</reference>